<feature type="chain" id="PRO_0000068128" description="Glucose-6-phosphate 1-dehydrogenase 1">
    <location>
        <begin position="1"/>
        <end position="466"/>
    </location>
</feature>
<feature type="active site" description="Proton acceptor" evidence="1">
    <location>
        <position position="233"/>
    </location>
</feature>
<feature type="binding site" evidence="1">
    <location>
        <position position="48"/>
    </location>
    <ligand>
        <name>NADP(+)</name>
        <dbReference type="ChEBI" id="CHEBI:58349"/>
    </ligand>
</feature>
<feature type="binding site" evidence="1">
    <location>
        <begin position="88"/>
        <end position="89"/>
    </location>
    <ligand>
        <name>NADP(+)</name>
        <dbReference type="ChEBI" id="CHEBI:58349"/>
    </ligand>
</feature>
<feature type="binding site" evidence="1">
    <location>
        <position position="141"/>
    </location>
    <ligand>
        <name>NADP(+)</name>
        <dbReference type="ChEBI" id="CHEBI:58349"/>
    </ligand>
</feature>
<feature type="binding site" evidence="1">
    <location>
        <position position="171"/>
    </location>
    <ligand>
        <name>substrate</name>
    </ligand>
</feature>
<feature type="binding site" evidence="1">
    <location>
        <position position="175"/>
    </location>
    <ligand>
        <name>substrate</name>
    </ligand>
</feature>
<feature type="binding site" evidence="1">
    <location>
        <position position="209"/>
    </location>
    <ligand>
        <name>substrate</name>
    </ligand>
</feature>
<feature type="binding site" evidence="1">
    <location>
        <position position="228"/>
    </location>
    <ligand>
        <name>substrate</name>
    </ligand>
</feature>
<feature type="binding site" evidence="1">
    <location>
        <position position="319"/>
    </location>
    <ligand>
        <name>substrate</name>
    </ligand>
</feature>
<feature type="binding site" evidence="1">
    <location>
        <position position="324"/>
    </location>
    <ligand>
        <name>substrate</name>
    </ligand>
</feature>
<gene>
    <name evidence="1" type="primary">zwf1</name>
    <name type="synonym">zwf</name>
    <name type="ordered locus">Rv1121</name>
    <name type="ORF">MTCY22G8.10</name>
</gene>
<sequence>MVDGGGGASDLLVIFGITGDLARKMTFRALYRLERHQLLDCPILGVASDDMSVGQLVKWARESIGRTEKIDDAVFDRLAGRLSYLHGDVTDSQLYDSLAELIGSACRPLYYLEMPPALFAPIVENLANVRLLERARVAVEKPFGHDLASALELNARLRAVLGEDQILRVDHFLGKQPVVELEYLRFANQALAELWDRNSISEIHITMAEDFGVEDRGKFYDAVGALRDVVQNHLLQVLALVTMEPPVGSSADDLNDKKAEVFRAMAPLDPDRCVRGQYLGYTEVAGVASDSATETYVALRTEIDNWRWAGVPIFVRAGKELPAKVTEVRLFLRRVPALAFLPNRRPAEPNQIVLRIDPDPGMRLQISAHTDDSWRDIHLDSSFAVDLGEPIRPYERLLYAGLVGDHQLFAREDSIEQTWRIVQPLLDNPGEIHRYDRGSWGPEAAQSLLRGHRGWQSPWLPRGTDA</sequence>
<accession>P9WN71</accession>
<accession>L0T5T3</accession>
<accession>O06573</accession>
<accession>P0A586</accession>
<comment type="function">
    <text evidence="1">Catalyzes the oxidation of glucose 6-phosphate to 6-phosphogluconolactone.</text>
</comment>
<comment type="catalytic activity">
    <reaction evidence="1">
        <text>D-glucose 6-phosphate + NADP(+) = 6-phospho-D-glucono-1,5-lactone + NADPH + H(+)</text>
        <dbReference type="Rhea" id="RHEA:15841"/>
        <dbReference type="ChEBI" id="CHEBI:15378"/>
        <dbReference type="ChEBI" id="CHEBI:57783"/>
        <dbReference type="ChEBI" id="CHEBI:57955"/>
        <dbReference type="ChEBI" id="CHEBI:58349"/>
        <dbReference type="ChEBI" id="CHEBI:61548"/>
        <dbReference type="EC" id="1.1.1.49"/>
    </reaction>
</comment>
<comment type="pathway">
    <text evidence="1">Carbohydrate degradation; pentose phosphate pathway; D-ribulose 5-phosphate from D-glucose 6-phosphate (oxidative stage): step 1/3.</text>
</comment>
<comment type="similarity">
    <text evidence="1">Belongs to the glucose-6-phosphate dehydrogenase family.</text>
</comment>
<proteinExistence type="evidence at protein level"/>
<protein>
    <recommendedName>
        <fullName evidence="1">Glucose-6-phosphate 1-dehydrogenase 1</fullName>
        <shortName evidence="1">G6PD 1</shortName>
        <ecNumber evidence="1">1.1.1.49</ecNumber>
    </recommendedName>
</protein>
<dbReference type="EC" id="1.1.1.49" evidence="1"/>
<dbReference type="EMBL" id="AL123456">
    <property type="protein sequence ID" value="CCP43875.1"/>
    <property type="molecule type" value="Genomic_DNA"/>
</dbReference>
<dbReference type="PIR" id="B70538">
    <property type="entry name" value="B70538"/>
</dbReference>
<dbReference type="RefSeq" id="WP_003898735.1">
    <property type="nucleotide sequence ID" value="NZ_NVQJ01000021.1"/>
</dbReference>
<dbReference type="RefSeq" id="YP_177789.1">
    <property type="nucleotide sequence ID" value="NC_000962.3"/>
</dbReference>
<dbReference type="SMR" id="P9WN71"/>
<dbReference type="FunCoup" id="P9WN71">
    <property type="interactions" value="107"/>
</dbReference>
<dbReference type="STRING" id="83332.Rv1121"/>
<dbReference type="PaxDb" id="83332-Rv1121"/>
<dbReference type="GeneID" id="885817"/>
<dbReference type="KEGG" id="mtu:Rv1121"/>
<dbReference type="KEGG" id="mtv:RVBD_1121"/>
<dbReference type="TubercuList" id="Rv1121"/>
<dbReference type="eggNOG" id="COG0364">
    <property type="taxonomic scope" value="Bacteria"/>
</dbReference>
<dbReference type="InParanoid" id="P9WN71"/>
<dbReference type="OrthoDB" id="9802739at2"/>
<dbReference type="PhylomeDB" id="P9WN71"/>
<dbReference type="UniPathway" id="UPA00115">
    <property type="reaction ID" value="UER00408"/>
</dbReference>
<dbReference type="Proteomes" id="UP000001584">
    <property type="component" value="Chromosome"/>
</dbReference>
<dbReference type="GO" id="GO:0005829">
    <property type="term" value="C:cytosol"/>
    <property type="evidence" value="ECO:0000318"/>
    <property type="project" value="GO_Central"/>
</dbReference>
<dbReference type="GO" id="GO:0005886">
    <property type="term" value="C:plasma membrane"/>
    <property type="evidence" value="ECO:0007005"/>
    <property type="project" value="MTBBASE"/>
</dbReference>
<dbReference type="GO" id="GO:0004345">
    <property type="term" value="F:glucose-6-phosphate dehydrogenase activity"/>
    <property type="evidence" value="ECO:0000318"/>
    <property type="project" value="GO_Central"/>
</dbReference>
<dbReference type="GO" id="GO:0050661">
    <property type="term" value="F:NADP binding"/>
    <property type="evidence" value="ECO:0007669"/>
    <property type="project" value="UniProtKB-UniRule"/>
</dbReference>
<dbReference type="GO" id="GO:0006006">
    <property type="term" value="P:glucose metabolic process"/>
    <property type="evidence" value="ECO:0000318"/>
    <property type="project" value="GO_Central"/>
</dbReference>
<dbReference type="GO" id="GO:0009051">
    <property type="term" value="P:pentose-phosphate shunt, oxidative branch"/>
    <property type="evidence" value="ECO:0000318"/>
    <property type="project" value="GO_Central"/>
</dbReference>
<dbReference type="Gene3D" id="3.30.360.10">
    <property type="entry name" value="Dihydrodipicolinate Reductase, domain 2"/>
    <property type="match status" value="1"/>
</dbReference>
<dbReference type="Gene3D" id="3.40.50.720">
    <property type="entry name" value="NAD(P)-binding Rossmann-like Domain"/>
    <property type="match status" value="1"/>
</dbReference>
<dbReference type="HAMAP" id="MF_00966">
    <property type="entry name" value="G6PD"/>
    <property type="match status" value="1"/>
</dbReference>
<dbReference type="InterPro" id="IPR001282">
    <property type="entry name" value="G6P_DH"/>
</dbReference>
<dbReference type="InterPro" id="IPR019796">
    <property type="entry name" value="G6P_DH_AS"/>
</dbReference>
<dbReference type="InterPro" id="IPR022675">
    <property type="entry name" value="G6P_DH_C"/>
</dbReference>
<dbReference type="InterPro" id="IPR022674">
    <property type="entry name" value="G6P_DH_NAD-bd"/>
</dbReference>
<dbReference type="InterPro" id="IPR036291">
    <property type="entry name" value="NAD(P)-bd_dom_sf"/>
</dbReference>
<dbReference type="NCBIfam" id="NF009492">
    <property type="entry name" value="PRK12853.1-3"/>
    <property type="match status" value="1"/>
</dbReference>
<dbReference type="NCBIfam" id="TIGR00871">
    <property type="entry name" value="zwf"/>
    <property type="match status" value="1"/>
</dbReference>
<dbReference type="PANTHER" id="PTHR23429:SF0">
    <property type="entry name" value="GLUCOSE-6-PHOSPHATE 1-DEHYDROGENASE"/>
    <property type="match status" value="1"/>
</dbReference>
<dbReference type="PANTHER" id="PTHR23429">
    <property type="entry name" value="GLUCOSE-6-PHOSPHATE 1-DEHYDROGENASE G6PD"/>
    <property type="match status" value="1"/>
</dbReference>
<dbReference type="Pfam" id="PF02781">
    <property type="entry name" value="G6PD_C"/>
    <property type="match status" value="1"/>
</dbReference>
<dbReference type="Pfam" id="PF00479">
    <property type="entry name" value="G6PD_N"/>
    <property type="match status" value="1"/>
</dbReference>
<dbReference type="PIRSF" id="PIRSF000110">
    <property type="entry name" value="G6PD"/>
    <property type="match status" value="1"/>
</dbReference>
<dbReference type="PRINTS" id="PR00079">
    <property type="entry name" value="G6PDHDRGNASE"/>
</dbReference>
<dbReference type="SUPFAM" id="SSF55347">
    <property type="entry name" value="Glyceraldehyde-3-phosphate dehydrogenase-like, C-terminal domain"/>
    <property type="match status" value="1"/>
</dbReference>
<dbReference type="SUPFAM" id="SSF51735">
    <property type="entry name" value="NAD(P)-binding Rossmann-fold domains"/>
    <property type="match status" value="1"/>
</dbReference>
<dbReference type="PROSITE" id="PS00069">
    <property type="entry name" value="G6P_DEHYDROGENASE"/>
    <property type="match status" value="1"/>
</dbReference>
<evidence type="ECO:0000255" key="1">
    <source>
        <dbReference type="HAMAP-Rule" id="MF_00966"/>
    </source>
</evidence>
<name>G6PD1_MYCTU</name>
<keyword id="KW-0119">Carbohydrate metabolism</keyword>
<keyword id="KW-0313">Glucose metabolism</keyword>
<keyword id="KW-0521">NADP</keyword>
<keyword id="KW-0560">Oxidoreductase</keyword>
<keyword id="KW-1185">Reference proteome</keyword>
<reference key="1">
    <citation type="journal article" date="1998" name="Nature">
        <title>Deciphering the biology of Mycobacterium tuberculosis from the complete genome sequence.</title>
        <authorList>
            <person name="Cole S.T."/>
            <person name="Brosch R."/>
            <person name="Parkhill J."/>
            <person name="Garnier T."/>
            <person name="Churcher C.M."/>
            <person name="Harris D.E."/>
            <person name="Gordon S.V."/>
            <person name="Eiglmeier K."/>
            <person name="Gas S."/>
            <person name="Barry C.E. III"/>
            <person name="Tekaia F."/>
            <person name="Badcock K."/>
            <person name="Basham D."/>
            <person name="Brown D."/>
            <person name="Chillingworth T."/>
            <person name="Connor R."/>
            <person name="Davies R.M."/>
            <person name="Devlin K."/>
            <person name="Feltwell T."/>
            <person name="Gentles S."/>
            <person name="Hamlin N."/>
            <person name="Holroyd S."/>
            <person name="Hornsby T."/>
            <person name="Jagels K."/>
            <person name="Krogh A."/>
            <person name="McLean J."/>
            <person name="Moule S."/>
            <person name="Murphy L.D."/>
            <person name="Oliver S."/>
            <person name="Osborne J."/>
            <person name="Quail M.A."/>
            <person name="Rajandream M.A."/>
            <person name="Rogers J."/>
            <person name="Rutter S."/>
            <person name="Seeger K."/>
            <person name="Skelton S."/>
            <person name="Squares S."/>
            <person name="Squares R."/>
            <person name="Sulston J.E."/>
            <person name="Taylor K."/>
            <person name="Whitehead S."/>
            <person name="Barrell B.G."/>
        </authorList>
    </citation>
    <scope>NUCLEOTIDE SEQUENCE [LARGE SCALE GENOMIC DNA]</scope>
    <source>
        <strain>ATCC 25618 / H37Rv</strain>
    </source>
</reference>
<reference key="2">
    <citation type="journal article" date="2011" name="Mol. Cell. Proteomics">
        <title>Proteogenomic analysis of Mycobacterium tuberculosis by high resolution mass spectrometry.</title>
        <authorList>
            <person name="Kelkar D.S."/>
            <person name="Kumar D."/>
            <person name="Kumar P."/>
            <person name="Balakrishnan L."/>
            <person name="Muthusamy B."/>
            <person name="Yadav A.K."/>
            <person name="Shrivastava P."/>
            <person name="Marimuthu A."/>
            <person name="Anand S."/>
            <person name="Sundaram H."/>
            <person name="Kingsbury R."/>
            <person name="Harsha H.C."/>
            <person name="Nair B."/>
            <person name="Prasad T.S."/>
            <person name="Chauhan D.S."/>
            <person name="Katoch K."/>
            <person name="Katoch V.M."/>
            <person name="Kumar P."/>
            <person name="Chaerkady R."/>
            <person name="Ramachandran S."/>
            <person name="Dash D."/>
            <person name="Pandey A."/>
        </authorList>
    </citation>
    <scope>IDENTIFICATION BY MASS SPECTROMETRY [LARGE SCALE ANALYSIS]</scope>
    <source>
        <strain>ATCC 25618 / H37Rv</strain>
    </source>
</reference>
<organism>
    <name type="scientific">Mycobacterium tuberculosis (strain ATCC 25618 / H37Rv)</name>
    <dbReference type="NCBI Taxonomy" id="83332"/>
    <lineage>
        <taxon>Bacteria</taxon>
        <taxon>Bacillati</taxon>
        <taxon>Actinomycetota</taxon>
        <taxon>Actinomycetes</taxon>
        <taxon>Mycobacteriales</taxon>
        <taxon>Mycobacteriaceae</taxon>
        <taxon>Mycobacterium</taxon>
        <taxon>Mycobacterium tuberculosis complex</taxon>
    </lineage>
</organism>